<sequence length="1594" mass="179455">MRTRFLNIDYFSTPPSHVFETLGFLNLPAPDNFPAPIVYNGEEDRLRFGSIENVSIPIGNLPIEAALSKFLSDVVPDRVSVDYRVFEIDDSSLGVYYSDEKDDGDAIADKATPKIIELETPELDFEMENKLLCTSEDHLQCFSEVLEIKNDPVKYEGSDIILQNSKDIQEQIYSVDYIPSDYFTENNTSVAENECFRKIQPWFKDARFPLLEVDEVNLSELSSLSVLDKVFTVLETIEPQDTNAGSSLIINSKELIGSKDYDLLDVLSTDCYLNKSGQSDVVPEDEFSEMDIVTILEISNAEEFQGKVAVPVTYEEFQILDVDISDVFDIFLCLQKAIEPEICYGMFSKEMNFKDFDELVVSSELAFTDDAFKSLPTPILHDYEMTRSLELIYEDVLSKIKPQSLSASNDIYLPWNLLEERNHNHCDYPFEEIVTFNIDYNWEASEGDKWVYDFIFSEDAFCEPLVEKCTEPFYGISNLDEHAPVNTSHGLLENPFQKTGARDCAVDDNAKKATLLFKSMSAFDDLTFFMDPKKAVIEDNLESRVEAAKTTNHKCMSIDSKASCRSGGMHPNPKTEEMILHSVRPSENIQALVGEFVKSYLTLVKDESENLSEDKLKLLSISKGKLIDCIRKANVHKTQLADDKTFTFALLLAIKQMTWYMCFFGIHVAYIYLNKVCRSSNPMKIGLHTLYSAVETEHKSDETDITRSHPSLAVIQGILQSEFARGNSKALLLAEKVFWSSLKRLLMSMGLSYNDLNSPSPSGNRPNVHEAIELGFLPISDCLIISYEQISPSFPVENFSVIVEYGGPNASPRYSFPSKLDSFPSFHFIKVELDMPSACGQLCAGVTVPYSLKMIKGDEVETKTGWLEEVLNFVPLEKVCYAGSSETTNESEFISMPQESERKRGIIEQGLSDQRSVIVVNTKTVDKEMIISRRSTYQKVLAMEKEGVQVVERDSDLPVDLMLSPAVCLLWYDSETVSKKSAATIGTSSSSLSWIGDIATNVLTSLSFSFSTCIMVFEGEPAFLAAVMDSSDELYAAAGSLGISLQMFCSSSANLTDEIILKCIKSSVKLSKLHVKMPESESLAESFLTKFPSVNPLTAQVILSSSGSLLEFMKLPHKSKVERTQKYHVPEESVDLFSSVCRYGAREDSRSVMTDSSSSVSSGPDSDTHHVSVHSGSKKKQYIAEKDEIDMDDLVHFSPSIEFADTQLKSSGDFQLDDSWSSKDHEIFHFDPVTEFSDAPFKPSGISHPNDSWPSKDPERFDKKSGPGSSSKDTFWEKDQPDFSVEDSLPGIPELEDWSFPVKDKFMSQNRGCKFPVMRDFNLHDNRNSENFIADYKGEVIDRADKYLEEDFPPSPGYNRFARIVSDVNEEELPRKSKSSRKLSFFGSLQPNFPKAADIDSSSERYATEKDSKYDNNTSLRGYADNYPAKRQRTLLEEVLTRRSAVPTTELPFREEISHFGGSPLSNAIRSSNQVQSSPWTVDFLNRVRERSRARKQQQSLPSYASPPSLETPGNIKKANTKRKSPSILEFFKYKGGNKLQEEKRQKRSKNSSASPKNERFYSPLKSCTPIDKRAKQSLSYTANGTGQTKLVWK</sequence>
<accession>F4KG50</accession>
<accession>B6D435</accession>
<accession>Q9FHD0</accession>
<gene>
    <name evidence="4" type="primary">SHOC1</name>
    <name evidence="6" type="ordered locus">At5g52290</name>
</gene>
<dbReference type="EMBL" id="EU753184">
    <property type="protein sequence ID" value="ACI22656.1"/>
    <property type="status" value="ALT_FRAME"/>
    <property type="molecule type" value="mRNA"/>
</dbReference>
<dbReference type="EMBL" id="AB019226">
    <property type="protein sequence ID" value="BAB10526.1"/>
    <property type="status" value="ALT_SEQ"/>
    <property type="molecule type" value="Genomic_DNA"/>
</dbReference>
<dbReference type="EMBL" id="CP002688">
    <property type="protein sequence ID" value="AED96196.1"/>
    <property type="molecule type" value="Genomic_DNA"/>
</dbReference>
<dbReference type="RefSeq" id="NP_200042.4">
    <property type="nucleotide sequence ID" value="NM_124608.5"/>
</dbReference>
<dbReference type="FunCoup" id="F4KG50">
    <property type="interactions" value="179"/>
</dbReference>
<dbReference type="STRING" id="3702.F4KG50"/>
<dbReference type="iPTMnet" id="F4KG50"/>
<dbReference type="PaxDb" id="3702-AT5G52290.1"/>
<dbReference type="EnsemblPlants" id="AT5G52290.1">
    <property type="protein sequence ID" value="AT5G52290.1"/>
    <property type="gene ID" value="AT5G52290"/>
</dbReference>
<dbReference type="GeneID" id="835305"/>
<dbReference type="Gramene" id="AT5G52290.1">
    <property type="protein sequence ID" value="AT5G52290.1"/>
    <property type="gene ID" value="AT5G52290"/>
</dbReference>
<dbReference type="KEGG" id="ath:AT5G52290"/>
<dbReference type="Araport" id="AT5G52290"/>
<dbReference type="TAIR" id="AT5G52290">
    <property type="gene designation" value="SHOC1"/>
</dbReference>
<dbReference type="eggNOG" id="ENOG502QT2G">
    <property type="taxonomic scope" value="Eukaryota"/>
</dbReference>
<dbReference type="HOGENOM" id="CLU_244058_0_0_1"/>
<dbReference type="InParanoid" id="F4KG50"/>
<dbReference type="OMA" id="WYDCRNI"/>
<dbReference type="PRO" id="PR:F4KG50"/>
<dbReference type="Proteomes" id="UP000006548">
    <property type="component" value="Chromosome 5"/>
</dbReference>
<dbReference type="ExpressionAtlas" id="F4KG50">
    <property type="expression patterns" value="baseline and differential"/>
</dbReference>
<dbReference type="GO" id="GO:0005634">
    <property type="term" value="C:nucleus"/>
    <property type="evidence" value="ECO:0007669"/>
    <property type="project" value="UniProtKB-SubCell"/>
</dbReference>
<dbReference type="GO" id="GO:0009506">
    <property type="term" value="C:plasmodesma"/>
    <property type="evidence" value="ECO:0007005"/>
    <property type="project" value="TAIR"/>
</dbReference>
<dbReference type="GO" id="GO:0000712">
    <property type="term" value="P:resolution of meiotic recombination intermediates"/>
    <property type="evidence" value="ECO:0000315"/>
    <property type="project" value="UniProtKB"/>
</dbReference>
<dbReference type="InterPro" id="IPR038824">
    <property type="entry name" value="SHOC1-like"/>
</dbReference>
<dbReference type="PANTHER" id="PTHR35764">
    <property type="entry name" value="PROTEIN SHORTAGE IN CHIASMATA 1"/>
    <property type="match status" value="1"/>
</dbReference>
<dbReference type="PANTHER" id="PTHR35764:SF1">
    <property type="entry name" value="PROTEIN SHORTAGE IN CHIASMATA 1"/>
    <property type="match status" value="1"/>
</dbReference>
<evidence type="ECO:0000256" key="1">
    <source>
        <dbReference type="SAM" id="MobiDB-lite"/>
    </source>
</evidence>
<evidence type="ECO:0000269" key="2">
    <source>
    </source>
</evidence>
<evidence type="ECO:0000269" key="3">
    <source>
    </source>
</evidence>
<evidence type="ECO:0000303" key="4">
    <source>
    </source>
</evidence>
<evidence type="ECO:0000305" key="5"/>
<evidence type="ECO:0000312" key="6">
    <source>
        <dbReference type="Araport" id="AT5G52290"/>
    </source>
</evidence>
<protein>
    <recommendedName>
        <fullName evidence="4">Protein SHORTAGE IN CHIASMATA 1</fullName>
    </recommendedName>
</protein>
<reference key="1">
    <citation type="journal article" date="2008" name="Curr. Biol.">
        <title>SHOC1, an XPF endonuclease-related protein, is essential for the formation of class I meiotic crossovers.</title>
        <authorList>
            <person name="Macaisne N."/>
            <person name="Novatchkova M."/>
            <person name="Peirera L."/>
            <person name="Vezon D."/>
            <person name="Jolivet S."/>
            <person name="Froger N."/>
            <person name="Chelysheva L."/>
            <person name="Grelon M."/>
            <person name="Mercier R."/>
        </authorList>
    </citation>
    <scope>NUCLEOTIDE SEQUENCE [MRNA]</scope>
    <scope>FUNCTION</scope>
    <scope>DISRUPTION PHENOTYPE</scope>
    <scope>TISSUE SPECIFICITY</scope>
    <source>
        <strain>cv. Columbia</strain>
        <strain>cv. Wassilewskija-4</strain>
    </source>
</reference>
<reference key="2">
    <citation type="journal article" date="2000" name="DNA Res.">
        <title>Structural analysis of Arabidopsis thaliana chromosome 5. X. Sequence features of the regions of 3,076,755 bp covered by sixty P1 and TAC clones.</title>
        <authorList>
            <person name="Sato S."/>
            <person name="Nakamura Y."/>
            <person name="Kaneko T."/>
            <person name="Katoh T."/>
            <person name="Asamizu E."/>
            <person name="Kotani H."/>
            <person name="Tabata S."/>
        </authorList>
    </citation>
    <scope>NUCLEOTIDE SEQUENCE [LARGE SCALE GENOMIC DNA]</scope>
    <source>
        <strain>cv. Columbia</strain>
    </source>
</reference>
<reference key="3">
    <citation type="journal article" date="2017" name="Plant J.">
        <title>Araport11: a complete reannotation of the Arabidopsis thaliana reference genome.</title>
        <authorList>
            <person name="Cheng C.Y."/>
            <person name="Krishnakumar V."/>
            <person name="Chan A.P."/>
            <person name="Thibaud-Nissen F."/>
            <person name="Schobel S."/>
            <person name="Town C.D."/>
        </authorList>
    </citation>
    <scope>GENOME REANNOTATION</scope>
    <source>
        <strain>cv. Columbia</strain>
    </source>
</reference>
<reference key="4">
    <citation type="journal article" date="2011" name="J. Cell Sci.">
        <title>SHOC1 and PTD form an XPF-ERCC1-like complex that is required for formation of class I crossovers.</title>
        <authorList>
            <person name="Macaisne N."/>
            <person name="Vignard J."/>
            <person name="Mercier R."/>
        </authorList>
    </citation>
    <scope>FUNCTION</scope>
    <scope>DISRUPTION PHENOTYPE</scope>
    <scope>INTERACTION WITH PTD</scope>
    <source>
        <strain>cv. Columbia</strain>
    </source>
</reference>
<name>SHOC1_ARATH</name>
<keyword id="KW-0233">DNA recombination</keyword>
<keyword id="KW-0469">Meiosis</keyword>
<keyword id="KW-0539">Nucleus</keyword>
<keyword id="KW-1185">Reference proteome</keyword>
<organism>
    <name type="scientific">Arabidopsis thaliana</name>
    <name type="common">Mouse-ear cress</name>
    <dbReference type="NCBI Taxonomy" id="3702"/>
    <lineage>
        <taxon>Eukaryota</taxon>
        <taxon>Viridiplantae</taxon>
        <taxon>Streptophyta</taxon>
        <taxon>Embryophyta</taxon>
        <taxon>Tracheophyta</taxon>
        <taxon>Spermatophyta</taxon>
        <taxon>Magnoliopsida</taxon>
        <taxon>eudicotyledons</taxon>
        <taxon>Gunneridae</taxon>
        <taxon>Pentapetalae</taxon>
        <taxon>rosids</taxon>
        <taxon>malvids</taxon>
        <taxon>Brassicales</taxon>
        <taxon>Brassicaceae</taxon>
        <taxon>Camelineae</taxon>
        <taxon>Arabidopsis</taxon>
    </lineage>
</organism>
<comment type="function">
    <text evidence="2 3">Essential for the formation of class I meiotic crossovers.</text>
</comment>
<comment type="subunit">
    <text evidence="3">Interacts with PTD.</text>
</comment>
<comment type="subcellular location">
    <subcellularLocation>
        <location evidence="5">Nucleus</location>
    </subcellularLocation>
</comment>
<comment type="tissue specificity">
    <text evidence="2">Highest levels in young buds, where male meiosis occurs. Also present at low levels in plantlets, leaves, flowers, and roots.</text>
</comment>
<comment type="disruption phenotype">
    <text evidence="2 3">Reduction in the number of class I crossovers (COs) during meiosis (PubMed:18812090, PubMed:21771883). Impaired fertility due to altered male and female meiosis (PubMed:18812090).</text>
</comment>
<comment type="similarity">
    <text evidence="5">Belongs to the XPF family.</text>
</comment>
<comment type="sequence caution" evidence="5">
    <conflict type="frameshift">
        <sequence resource="EMBL-CDS" id="ACI22656"/>
    </conflict>
</comment>
<comment type="sequence caution" evidence="5">
    <conflict type="erroneous gene model prediction">
        <sequence resource="EMBL-CDS" id="BAB10526"/>
    </conflict>
</comment>
<feature type="chain" id="PRO_0000438323" description="Protein SHORTAGE IN CHIASMATA 1">
    <location>
        <begin position="1"/>
        <end position="1594"/>
    </location>
</feature>
<feature type="region of interest" description="Disordered" evidence="1">
    <location>
        <begin position="1148"/>
        <end position="1180"/>
    </location>
</feature>
<feature type="region of interest" description="Disordered" evidence="1">
    <location>
        <begin position="1239"/>
        <end position="1283"/>
    </location>
</feature>
<feature type="region of interest" description="Disordered" evidence="1">
    <location>
        <begin position="1396"/>
        <end position="1426"/>
    </location>
</feature>
<feature type="region of interest" description="Disordered" evidence="1">
    <location>
        <begin position="1491"/>
        <end position="1523"/>
    </location>
</feature>
<feature type="region of interest" description="Disordered" evidence="1">
    <location>
        <begin position="1536"/>
        <end position="1594"/>
    </location>
</feature>
<feature type="compositionally biased region" description="Low complexity" evidence="1">
    <location>
        <begin position="1151"/>
        <end position="1165"/>
    </location>
</feature>
<feature type="compositionally biased region" description="Basic and acidic residues" evidence="1">
    <location>
        <begin position="1254"/>
        <end position="1265"/>
    </location>
</feature>
<feature type="compositionally biased region" description="Basic and acidic residues" evidence="1">
    <location>
        <begin position="1402"/>
        <end position="1414"/>
    </location>
</feature>
<feature type="compositionally biased region" description="Polar residues" evidence="1">
    <location>
        <begin position="1577"/>
        <end position="1594"/>
    </location>
</feature>
<feature type="sequence conflict" description="In Ref. 1; ACI22656." evidence="5" ref="1">
    <original>E</original>
    <variation>K</variation>
    <location>
        <position position="773"/>
    </location>
</feature>
<feature type="sequence conflict" description="In Ref. 1; ACI22656." evidence="5" ref="1">
    <original>S</original>
    <variation>R</variation>
    <location>
        <position position="837"/>
    </location>
</feature>
<proteinExistence type="evidence at protein level"/>